<sequence>MISKPDKNKLRQKRHRRVRGKLSGTADRPRLNVFRSNTGIYAQVIDDVAGVTLASASTLDKEVSKGTKTEQAVAVGKLVAERANAKGISEVVFDRGGYLYHGRVKALADAARENGLKF</sequence>
<organism>
    <name type="scientific">Streptococcus pneumoniae (strain Hungary19A-6)</name>
    <dbReference type="NCBI Taxonomy" id="487214"/>
    <lineage>
        <taxon>Bacteria</taxon>
        <taxon>Bacillati</taxon>
        <taxon>Bacillota</taxon>
        <taxon>Bacilli</taxon>
        <taxon>Lactobacillales</taxon>
        <taxon>Streptococcaceae</taxon>
        <taxon>Streptococcus</taxon>
    </lineage>
</organism>
<dbReference type="EMBL" id="CP000936">
    <property type="protein sequence ID" value="ACA36204.1"/>
    <property type="molecule type" value="Genomic_DNA"/>
</dbReference>
<dbReference type="RefSeq" id="WP_000624044.1">
    <property type="nucleotide sequence ID" value="NC_010380.1"/>
</dbReference>
<dbReference type="SMR" id="B1I8L4"/>
<dbReference type="GeneID" id="93738973"/>
<dbReference type="KEGG" id="spv:SPH_0339"/>
<dbReference type="HOGENOM" id="CLU_098841_0_1_9"/>
<dbReference type="Proteomes" id="UP000002163">
    <property type="component" value="Chromosome"/>
</dbReference>
<dbReference type="GO" id="GO:0022625">
    <property type="term" value="C:cytosolic large ribosomal subunit"/>
    <property type="evidence" value="ECO:0007669"/>
    <property type="project" value="TreeGrafter"/>
</dbReference>
<dbReference type="GO" id="GO:0008097">
    <property type="term" value="F:5S rRNA binding"/>
    <property type="evidence" value="ECO:0007669"/>
    <property type="project" value="TreeGrafter"/>
</dbReference>
<dbReference type="GO" id="GO:0003735">
    <property type="term" value="F:structural constituent of ribosome"/>
    <property type="evidence" value="ECO:0007669"/>
    <property type="project" value="InterPro"/>
</dbReference>
<dbReference type="GO" id="GO:0006412">
    <property type="term" value="P:translation"/>
    <property type="evidence" value="ECO:0007669"/>
    <property type="project" value="UniProtKB-UniRule"/>
</dbReference>
<dbReference type="CDD" id="cd00432">
    <property type="entry name" value="Ribosomal_L18_L5e"/>
    <property type="match status" value="1"/>
</dbReference>
<dbReference type="FunFam" id="3.30.420.100:FF:000001">
    <property type="entry name" value="50S ribosomal protein L18"/>
    <property type="match status" value="1"/>
</dbReference>
<dbReference type="Gene3D" id="3.30.420.100">
    <property type="match status" value="1"/>
</dbReference>
<dbReference type="HAMAP" id="MF_01337_B">
    <property type="entry name" value="Ribosomal_uL18_B"/>
    <property type="match status" value="1"/>
</dbReference>
<dbReference type="InterPro" id="IPR004389">
    <property type="entry name" value="Ribosomal_uL18_bac-type"/>
</dbReference>
<dbReference type="InterPro" id="IPR005484">
    <property type="entry name" value="Ribosomal_uL18_bac/euk"/>
</dbReference>
<dbReference type="NCBIfam" id="TIGR00060">
    <property type="entry name" value="L18_bact"/>
    <property type="match status" value="1"/>
</dbReference>
<dbReference type="PANTHER" id="PTHR12899">
    <property type="entry name" value="39S RIBOSOMAL PROTEIN L18, MITOCHONDRIAL"/>
    <property type="match status" value="1"/>
</dbReference>
<dbReference type="PANTHER" id="PTHR12899:SF3">
    <property type="entry name" value="LARGE RIBOSOMAL SUBUNIT PROTEIN UL18M"/>
    <property type="match status" value="1"/>
</dbReference>
<dbReference type="Pfam" id="PF00861">
    <property type="entry name" value="Ribosomal_L18p"/>
    <property type="match status" value="1"/>
</dbReference>
<dbReference type="SUPFAM" id="SSF53137">
    <property type="entry name" value="Translational machinery components"/>
    <property type="match status" value="1"/>
</dbReference>
<gene>
    <name evidence="1" type="primary">rplR</name>
    <name type="ordered locus">SPH_0339</name>
</gene>
<feature type="chain" id="PRO_1000142725" description="Large ribosomal subunit protein uL18">
    <location>
        <begin position="1"/>
        <end position="118"/>
    </location>
</feature>
<feature type="region of interest" description="Disordered" evidence="2">
    <location>
        <begin position="1"/>
        <end position="25"/>
    </location>
</feature>
<feature type="compositionally biased region" description="Basic residues" evidence="2">
    <location>
        <begin position="10"/>
        <end position="20"/>
    </location>
</feature>
<protein>
    <recommendedName>
        <fullName evidence="1">Large ribosomal subunit protein uL18</fullName>
    </recommendedName>
    <alternativeName>
        <fullName evidence="3">50S ribosomal protein L18</fullName>
    </alternativeName>
</protein>
<name>RL18_STRPI</name>
<evidence type="ECO:0000255" key="1">
    <source>
        <dbReference type="HAMAP-Rule" id="MF_01337"/>
    </source>
</evidence>
<evidence type="ECO:0000256" key="2">
    <source>
        <dbReference type="SAM" id="MobiDB-lite"/>
    </source>
</evidence>
<evidence type="ECO:0000305" key="3"/>
<comment type="function">
    <text evidence="1">This is one of the proteins that bind and probably mediate the attachment of the 5S RNA into the large ribosomal subunit, where it forms part of the central protuberance.</text>
</comment>
<comment type="subunit">
    <text evidence="1">Part of the 50S ribosomal subunit; part of the 5S rRNA/L5/L18/L25 subcomplex. Contacts the 5S and 23S rRNAs.</text>
</comment>
<comment type="similarity">
    <text evidence="1">Belongs to the universal ribosomal protein uL18 family.</text>
</comment>
<reference key="1">
    <citation type="journal article" date="2010" name="Genome Biol.">
        <title>Structure and dynamics of the pan-genome of Streptococcus pneumoniae and closely related species.</title>
        <authorList>
            <person name="Donati C."/>
            <person name="Hiller N.L."/>
            <person name="Tettelin H."/>
            <person name="Muzzi A."/>
            <person name="Croucher N.J."/>
            <person name="Angiuoli S.V."/>
            <person name="Oggioni M."/>
            <person name="Dunning Hotopp J.C."/>
            <person name="Hu F.Z."/>
            <person name="Riley D.R."/>
            <person name="Covacci A."/>
            <person name="Mitchell T.J."/>
            <person name="Bentley S.D."/>
            <person name="Kilian M."/>
            <person name="Ehrlich G.D."/>
            <person name="Rappuoli R."/>
            <person name="Moxon E.R."/>
            <person name="Masignani V."/>
        </authorList>
    </citation>
    <scope>NUCLEOTIDE SEQUENCE [LARGE SCALE GENOMIC DNA]</scope>
    <source>
        <strain>Hungary19A-6</strain>
    </source>
</reference>
<keyword id="KW-0687">Ribonucleoprotein</keyword>
<keyword id="KW-0689">Ribosomal protein</keyword>
<keyword id="KW-0694">RNA-binding</keyword>
<keyword id="KW-0699">rRNA-binding</keyword>
<accession>B1I8L4</accession>
<proteinExistence type="inferred from homology"/>